<gene>
    <name evidence="1" type="primary">deoC</name>
    <name type="ordered locus">SERP1745</name>
</gene>
<organism>
    <name type="scientific">Staphylococcus epidermidis (strain ATCC 35984 / DSM 28319 / BCRC 17069 / CCUG 31568 / BM 3577 / RP62A)</name>
    <dbReference type="NCBI Taxonomy" id="176279"/>
    <lineage>
        <taxon>Bacteria</taxon>
        <taxon>Bacillati</taxon>
        <taxon>Bacillota</taxon>
        <taxon>Bacilli</taxon>
        <taxon>Bacillales</taxon>
        <taxon>Staphylococcaceae</taxon>
        <taxon>Staphylococcus</taxon>
    </lineage>
</organism>
<protein>
    <recommendedName>
        <fullName evidence="1">Deoxyribose-phosphate aldolase</fullName>
        <shortName evidence="1">DERA</shortName>
        <ecNumber evidence="1">4.1.2.4</ecNumber>
    </recommendedName>
    <alternativeName>
        <fullName evidence="1">2-deoxy-D-ribose 5-phosphate aldolase</fullName>
    </alternativeName>
    <alternativeName>
        <fullName evidence="1">Phosphodeoxyriboaldolase</fullName>
        <shortName evidence="1">Deoxyriboaldolase</shortName>
    </alternativeName>
</protein>
<proteinExistence type="inferred from homology"/>
<name>DEOC_STAEQ</name>
<feature type="chain" id="PRO_0000057268" description="Deoxyribose-phosphate aldolase">
    <location>
        <begin position="1"/>
        <end position="220"/>
    </location>
</feature>
<feature type="active site" description="Proton donor/acceptor" evidence="1">
    <location>
        <position position="89"/>
    </location>
</feature>
<feature type="active site" description="Schiff-base intermediate with acetaldehyde" evidence="1">
    <location>
        <position position="151"/>
    </location>
</feature>
<feature type="active site" description="Proton donor/acceptor" evidence="1">
    <location>
        <position position="180"/>
    </location>
</feature>
<reference key="1">
    <citation type="journal article" date="2005" name="J. Bacteriol.">
        <title>Insights on evolution of virulence and resistance from the complete genome analysis of an early methicillin-resistant Staphylococcus aureus strain and a biofilm-producing methicillin-resistant Staphylococcus epidermidis strain.</title>
        <authorList>
            <person name="Gill S.R."/>
            <person name="Fouts D.E."/>
            <person name="Archer G.L."/>
            <person name="Mongodin E.F."/>
            <person name="DeBoy R.T."/>
            <person name="Ravel J."/>
            <person name="Paulsen I.T."/>
            <person name="Kolonay J.F."/>
            <person name="Brinkac L.M."/>
            <person name="Beanan M.J."/>
            <person name="Dodson R.J."/>
            <person name="Daugherty S.C."/>
            <person name="Madupu R."/>
            <person name="Angiuoli S.V."/>
            <person name="Durkin A.S."/>
            <person name="Haft D.H."/>
            <person name="Vamathevan J.J."/>
            <person name="Khouri H."/>
            <person name="Utterback T.R."/>
            <person name="Lee C."/>
            <person name="Dimitrov G."/>
            <person name="Jiang L."/>
            <person name="Qin H."/>
            <person name="Weidman J."/>
            <person name="Tran K."/>
            <person name="Kang K.H."/>
            <person name="Hance I.R."/>
            <person name="Nelson K.E."/>
            <person name="Fraser C.M."/>
        </authorList>
    </citation>
    <scope>NUCLEOTIDE SEQUENCE [LARGE SCALE GENOMIC DNA]</scope>
    <source>
        <strain>ATCC 35984 / DSM 28319 / BCRC 17069 / CCUG 31568 / BM 3577 / RP62A</strain>
    </source>
</reference>
<sequence length="220" mass="23495">MNKAKLIDHTLLKTDSTKEQIDTIINEAKAYQFKSVCVNPTHVQYASEQLKGTDVLVCTVIGFPLGATTTAVKSYETKDAINNGAQEIDMVINIGALKDGRFDKVQNDIEAVVQAANGKTVKVIIETVLLTEKEKIKACQLSEAAGAHFVKTSTGFAGGGATVEDVKLMKDTVGDRLEVKASGGVRNLEDFNNMIEAGATRIGASAGVQIIQGLESNTDY</sequence>
<keyword id="KW-0963">Cytoplasm</keyword>
<keyword id="KW-0456">Lyase</keyword>
<keyword id="KW-1185">Reference proteome</keyword>
<keyword id="KW-0704">Schiff base</keyword>
<evidence type="ECO:0000255" key="1">
    <source>
        <dbReference type="HAMAP-Rule" id="MF_00114"/>
    </source>
</evidence>
<comment type="function">
    <text evidence="1">Catalyzes a reversible aldol reaction between acetaldehyde and D-glyceraldehyde 3-phosphate to generate 2-deoxy-D-ribose 5-phosphate.</text>
</comment>
<comment type="catalytic activity">
    <reaction evidence="1">
        <text>2-deoxy-D-ribose 5-phosphate = D-glyceraldehyde 3-phosphate + acetaldehyde</text>
        <dbReference type="Rhea" id="RHEA:12821"/>
        <dbReference type="ChEBI" id="CHEBI:15343"/>
        <dbReference type="ChEBI" id="CHEBI:59776"/>
        <dbReference type="ChEBI" id="CHEBI:62877"/>
        <dbReference type="EC" id="4.1.2.4"/>
    </reaction>
</comment>
<comment type="pathway">
    <text evidence="1">Carbohydrate degradation; 2-deoxy-D-ribose 1-phosphate degradation; D-glyceraldehyde 3-phosphate and acetaldehyde from 2-deoxy-alpha-D-ribose 1-phosphate: step 2/2.</text>
</comment>
<comment type="subcellular location">
    <subcellularLocation>
        <location evidence="1">Cytoplasm</location>
    </subcellularLocation>
</comment>
<comment type="similarity">
    <text evidence="1">Belongs to the DeoC/FbaB aldolase family. DeoC type 1 subfamily.</text>
</comment>
<dbReference type="EC" id="4.1.2.4" evidence="1"/>
<dbReference type="EMBL" id="CP000029">
    <property type="protein sequence ID" value="AAW55075.1"/>
    <property type="molecule type" value="Genomic_DNA"/>
</dbReference>
<dbReference type="RefSeq" id="WP_002495579.1">
    <property type="nucleotide sequence ID" value="NC_002976.3"/>
</dbReference>
<dbReference type="SMR" id="Q5HM84"/>
<dbReference type="STRING" id="176279.SERP1745"/>
<dbReference type="KEGG" id="ser:SERP1745"/>
<dbReference type="eggNOG" id="COG0274">
    <property type="taxonomic scope" value="Bacteria"/>
</dbReference>
<dbReference type="HOGENOM" id="CLU_053595_0_2_9"/>
<dbReference type="UniPathway" id="UPA00002">
    <property type="reaction ID" value="UER00468"/>
</dbReference>
<dbReference type="Proteomes" id="UP000000531">
    <property type="component" value="Chromosome"/>
</dbReference>
<dbReference type="GO" id="GO:0005737">
    <property type="term" value="C:cytoplasm"/>
    <property type="evidence" value="ECO:0007669"/>
    <property type="project" value="UniProtKB-SubCell"/>
</dbReference>
<dbReference type="GO" id="GO:0004139">
    <property type="term" value="F:deoxyribose-phosphate aldolase activity"/>
    <property type="evidence" value="ECO:0007669"/>
    <property type="project" value="UniProtKB-UniRule"/>
</dbReference>
<dbReference type="GO" id="GO:0006018">
    <property type="term" value="P:2-deoxyribose 1-phosphate catabolic process"/>
    <property type="evidence" value="ECO:0007669"/>
    <property type="project" value="UniProtKB-UniRule"/>
</dbReference>
<dbReference type="GO" id="GO:0016052">
    <property type="term" value="P:carbohydrate catabolic process"/>
    <property type="evidence" value="ECO:0007669"/>
    <property type="project" value="TreeGrafter"/>
</dbReference>
<dbReference type="GO" id="GO:0009264">
    <property type="term" value="P:deoxyribonucleotide catabolic process"/>
    <property type="evidence" value="ECO:0007669"/>
    <property type="project" value="InterPro"/>
</dbReference>
<dbReference type="CDD" id="cd00959">
    <property type="entry name" value="DeoC"/>
    <property type="match status" value="1"/>
</dbReference>
<dbReference type="FunFam" id="3.20.20.70:FF:000044">
    <property type="entry name" value="Deoxyribose-phosphate aldolase"/>
    <property type="match status" value="1"/>
</dbReference>
<dbReference type="Gene3D" id="3.20.20.70">
    <property type="entry name" value="Aldolase class I"/>
    <property type="match status" value="1"/>
</dbReference>
<dbReference type="HAMAP" id="MF_00114">
    <property type="entry name" value="DeoC_type1"/>
    <property type="match status" value="1"/>
</dbReference>
<dbReference type="InterPro" id="IPR013785">
    <property type="entry name" value="Aldolase_TIM"/>
</dbReference>
<dbReference type="InterPro" id="IPR011343">
    <property type="entry name" value="DeoC"/>
</dbReference>
<dbReference type="InterPro" id="IPR002915">
    <property type="entry name" value="DeoC/FbaB/LacD_aldolase"/>
</dbReference>
<dbReference type="InterPro" id="IPR028581">
    <property type="entry name" value="DeoC_typeI"/>
</dbReference>
<dbReference type="NCBIfam" id="TIGR00126">
    <property type="entry name" value="deoC"/>
    <property type="match status" value="1"/>
</dbReference>
<dbReference type="PANTHER" id="PTHR10889">
    <property type="entry name" value="DEOXYRIBOSE-PHOSPHATE ALDOLASE"/>
    <property type="match status" value="1"/>
</dbReference>
<dbReference type="PANTHER" id="PTHR10889:SF1">
    <property type="entry name" value="DEOXYRIBOSE-PHOSPHATE ALDOLASE"/>
    <property type="match status" value="1"/>
</dbReference>
<dbReference type="Pfam" id="PF01791">
    <property type="entry name" value="DeoC"/>
    <property type="match status" value="1"/>
</dbReference>
<dbReference type="PIRSF" id="PIRSF001357">
    <property type="entry name" value="DeoC"/>
    <property type="match status" value="1"/>
</dbReference>
<dbReference type="SMART" id="SM01133">
    <property type="entry name" value="DeoC"/>
    <property type="match status" value="1"/>
</dbReference>
<dbReference type="SUPFAM" id="SSF51569">
    <property type="entry name" value="Aldolase"/>
    <property type="match status" value="1"/>
</dbReference>
<accession>Q5HM84</accession>